<proteinExistence type="inferred from homology"/>
<feature type="chain" id="PRO_0000313357" description="DNA ligase">
    <location>
        <begin position="1"/>
        <end position="704"/>
    </location>
</feature>
<feature type="domain" description="BRCT" evidence="1">
    <location>
        <begin position="625"/>
        <end position="704"/>
    </location>
</feature>
<feature type="active site" description="N6-AMP-lysine intermediate" evidence="1">
    <location>
        <position position="127"/>
    </location>
</feature>
<feature type="binding site" evidence="1">
    <location>
        <begin position="44"/>
        <end position="48"/>
    </location>
    <ligand>
        <name>NAD(+)</name>
        <dbReference type="ChEBI" id="CHEBI:57540"/>
    </ligand>
</feature>
<feature type="binding site" evidence="1">
    <location>
        <begin position="93"/>
        <end position="94"/>
    </location>
    <ligand>
        <name>NAD(+)</name>
        <dbReference type="ChEBI" id="CHEBI:57540"/>
    </ligand>
</feature>
<feature type="binding site" evidence="1">
    <location>
        <position position="125"/>
    </location>
    <ligand>
        <name>NAD(+)</name>
        <dbReference type="ChEBI" id="CHEBI:57540"/>
    </ligand>
</feature>
<feature type="binding site" evidence="1">
    <location>
        <position position="148"/>
    </location>
    <ligand>
        <name>NAD(+)</name>
        <dbReference type="ChEBI" id="CHEBI:57540"/>
    </ligand>
</feature>
<feature type="binding site" evidence="1">
    <location>
        <position position="184"/>
    </location>
    <ligand>
        <name>NAD(+)</name>
        <dbReference type="ChEBI" id="CHEBI:57540"/>
    </ligand>
</feature>
<feature type="binding site" evidence="1">
    <location>
        <position position="300"/>
    </location>
    <ligand>
        <name>NAD(+)</name>
        <dbReference type="ChEBI" id="CHEBI:57540"/>
    </ligand>
</feature>
<feature type="binding site" evidence="1">
    <location>
        <position position="324"/>
    </location>
    <ligand>
        <name>NAD(+)</name>
        <dbReference type="ChEBI" id="CHEBI:57540"/>
    </ligand>
</feature>
<feature type="binding site" evidence="1">
    <location>
        <position position="418"/>
    </location>
    <ligand>
        <name>Zn(2+)</name>
        <dbReference type="ChEBI" id="CHEBI:29105"/>
    </ligand>
</feature>
<feature type="binding site" evidence="1">
    <location>
        <position position="421"/>
    </location>
    <ligand>
        <name>Zn(2+)</name>
        <dbReference type="ChEBI" id="CHEBI:29105"/>
    </ligand>
</feature>
<feature type="binding site" evidence="1">
    <location>
        <position position="436"/>
    </location>
    <ligand>
        <name>Zn(2+)</name>
        <dbReference type="ChEBI" id="CHEBI:29105"/>
    </ligand>
</feature>
<feature type="binding site" evidence="1">
    <location>
        <position position="442"/>
    </location>
    <ligand>
        <name>Zn(2+)</name>
        <dbReference type="ChEBI" id="CHEBI:29105"/>
    </ligand>
</feature>
<sequence>MQNSPTTEQTKNIVAERIQELRQLIAHNNRLYYENIPPRREIHDYEYDELFKELQELESRFPEFQSADSPTQIVGGSVSEGFKKVQHSVPMLSIENKPVTKMLSEVRSIIKELKDDAISIDIVAEPKIDGLSCSIRYEKHQLVRAATRGDGLEGEDITVNVHSISEIPKILPLDAPEVIEIRGEVYMSNSDFKQYTAQQNKIGEKPPENPRNAAAGSLRQLDPSVTASRPLRFFAYAWGEISNSFAKSQWDALQTLRGWGFKVCDDIRLLYSSDELNSYFEEMQERRSELDFTIDGIVYKLNSLSLQERVGQTNRAPRWAAAQKFPPEKRETLLQNITISVGRSGALTPVAELLPVRLLGTTVSNATLHNQDEVECKDFRIDDTIVVQRAGDVIPQVVSVVIEKRLSGSIPFVFPSACPVCGSKAVREPREAVWKCTGGLTCPAQSLERLKHFVSRDAFNIDGLGEKNIELFYNKGLLASPVDIFRLEEILSPPLLWQQKPSEFKPLQEWDGWGELSANNLFRAIRTKQKITLYRFIYALGIPKVGEVTAKILADNYVSLDNWQSSMLKAAERESECYQHLISIDGIGSVVADEIVSFFAEAHNIQVLDSLKNYLSVEDFTKPAIISSNISGKIVVFTGELEKRSRKAAKIEAEKFGAKVATDVSRKTDIVIAGTDPGSKLRKAQELGIKILSEDEWEHLINEK</sequence>
<accession>A1ATJ6</accession>
<protein>
    <recommendedName>
        <fullName evidence="1">DNA ligase</fullName>
        <ecNumber evidence="1">6.5.1.2</ecNumber>
    </recommendedName>
    <alternativeName>
        <fullName evidence="1">Polydeoxyribonucleotide synthase [NAD(+)]</fullName>
    </alternativeName>
</protein>
<name>DNLJ_PELPD</name>
<keyword id="KW-0227">DNA damage</keyword>
<keyword id="KW-0234">DNA repair</keyword>
<keyword id="KW-0235">DNA replication</keyword>
<keyword id="KW-0436">Ligase</keyword>
<keyword id="KW-0460">Magnesium</keyword>
<keyword id="KW-0464">Manganese</keyword>
<keyword id="KW-0479">Metal-binding</keyword>
<keyword id="KW-0520">NAD</keyword>
<keyword id="KW-1185">Reference proteome</keyword>
<keyword id="KW-0862">Zinc</keyword>
<evidence type="ECO:0000255" key="1">
    <source>
        <dbReference type="HAMAP-Rule" id="MF_01588"/>
    </source>
</evidence>
<gene>
    <name evidence="1" type="primary">ligA</name>
    <name type="ordered locus">Ppro_3071</name>
</gene>
<dbReference type="EC" id="6.5.1.2" evidence="1"/>
<dbReference type="EMBL" id="CP000482">
    <property type="protein sequence ID" value="ABL00667.1"/>
    <property type="molecule type" value="Genomic_DNA"/>
</dbReference>
<dbReference type="RefSeq" id="WP_011736902.1">
    <property type="nucleotide sequence ID" value="NC_008609.1"/>
</dbReference>
<dbReference type="SMR" id="A1ATJ6"/>
<dbReference type="STRING" id="338966.Ppro_3071"/>
<dbReference type="KEGG" id="ppd:Ppro_3071"/>
<dbReference type="eggNOG" id="COG0272">
    <property type="taxonomic scope" value="Bacteria"/>
</dbReference>
<dbReference type="HOGENOM" id="CLU_007764_2_1_7"/>
<dbReference type="OrthoDB" id="9759736at2"/>
<dbReference type="Proteomes" id="UP000006732">
    <property type="component" value="Chromosome"/>
</dbReference>
<dbReference type="GO" id="GO:0005829">
    <property type="term" value="C:cytosol"/>
    <property type="evidence" value="ECO:0007669"/>
    <property type="project" value="TreeGrafter"/>
</dbReference>
<dbReference type="GO" id="GO:0003911">
    <property type="term" value="F:DNA ligase (NAD+) activity"/>
    <property type="evidence" value="ECO:0007669"/>
    <property type="project" value="UniProtKB-UniRule"/>
</dbReference>
<dbReference type="GO" id="GO:0046872">
    <property type="term" value="F:metal ion binding"/>
    <property type="evidence" value="ECO:0007669"/>
    <property type="project" value="UniProtKB-KW"/>
</dbReference>
<dbReference type="GO" id="GO:0006281">
    <property type="term" value="P:DNA repair"/>
    <property type="evidence" value="ECO:0007669"/>
    <property type="project" value="UniProtKB-KW"/>
</dbReference>
<dbReference type="GO" id="GO:0006260">
    <property type="term" value="P:DNA replication"/>
    <property type="evidence" value="ECO:0007669"/>
    <property type="project" value="UniProtKB-KW"/>
</dbReference>
<dbReference type="CDD" id="cd17748">
    <property type="entry name" value="BRCT_DNA_ligase_like"/>
    <property type="match status" value="1"/>
</dbReference>
<dbReference type="CDD" id="cd00114">
    <property type="entry name" value="LIGANc"/>
    <property type="match status" value="1"/>
</dbReference>
<dbReference type="FunFam" id="2.40.50.140:FF:000012">
    <property type="entry name" value="DNA ligase"/>
    <property type="match status" value="1"/>
</dbReference>
<dbReference type="Gene3D" id="6.20.10.30">
    <property type="match status" value="1"/>
</dbReference>
<dbReference type="Gene3D" id="1.10.150.20">
    <property type="entry name" value="5' to 3' exonuclease, C-terminal subdomain"/>
    <property type="match status" value="2"/>
</dbReference>
<dbReference type="Gene3D" id="3.40.50.10190">
    <property type="entry name" value="BRCT domain"/>
    <property type="match status" value="1"/>
</dbReference>
<dbReference type="Gene3D" id="3.30.470.30">
    <property type="entry name" value="DNA ligase/mRNA capping enzyme"/>
    <property type="match status" value="1"/>
</dbReference>
<dbReference type="Gene3D" id="1.10.287.610">
    <property type="entry name" value="Helix hairpin bin"/>
    <property type="match status" value="1"/>
</dbReference>
<dbReference type="Gene3D" id="2.40.50.140">
    <property type="entry name" value="Nucleic acid-binding proteins"/>
    <property type="match status" value="1"/>
</dbReference>
<dbReference type="HAMAP" id="MF_01588">
    <property type="entry name" value="DNA_ligase_A"/>
    <property type="match status" value="1"/>
</dbReference>
<dbReference type="InterPro" id="IPR001357">
    <property type="entry name" value="BRCT_dom"/>
</dbReference>
<dbReference type="InterPro" id="IPR036420">
    <property type="entry name" value="BRCT_dom_sf"/>
</dbReference>
<dbReference type="InterPro" id="IPR041663">
    <property type="entry name" value="DisA/LigA_HHH"/>
</dbReference>
<dbReference type="InterPro" id="IPR001679">
    <property type="entry name" value="DNA_ligase"/>
</dbReference>
<dbReference type="InterPro" id="IPR033136">
    <property type="entry name" value="DNA_ligase_CS"/>
</dbReference>
<dbReference type="InterPro" id="IPR013839">
    <property type="entry name" value="DNAligase_adenylation"/>
</dbReference>
<dbReference type="InterPro" id="IPR013840">
    <property type="entry name" value="DNAligase_N"/>
</dbReference>
<dbReference type="InterPro" id="IPR012340">
    <property type="entry name" value="NA-bd_OB-fold"/>
</dbReference>
<dbReference type="InterPro" id="IPR004150">
    <property type="entry name" value="NAD_DNA_ligase_OB"/>
</dbReference>
<dbReference type="InterPro" id="IPR010994">
    <property type="entry name" value="RuvA_2-like"/>
</dbReference>
<dbReference type="InterPro" id="IPR004149">
    <property type="entry name" value="Znf_DNAligase_C4"/>
</dbReference>
<dbReference type="NCBIfam" id="TIGR00575">
    <property type="entry name" value="dnlj"/>
    <property type="match status" value="1"/>
</dbReference>
<dbReference type="NCBIfam" id="NF005932">
    <property type="entry name" value="PRK07956.1"/>
    <property type="match status" value="1"/>
</dbReference>
<dbReference type="PANTHER" id="PTHR23389">
    <property type="entry name" value="CHROMOSOME TRANSMISSION FIDELITY FACTOR 18"/>
    <property type="match status" value="1"/>
</dbReference>
<dbReference type="PANTHER" id="PTHR23389:SF9">
    <property type="entry name" value="DNA LIGASE"/>
    <property type="match status" value="1"/>
</dbReference>
<dbReference type="Pfam" id="PF00533">
    <property type="entry name" value="BRCT"/>
    <property type="match status" value="1"/>
</dbReference>
<dbReference type="Pfam" id="PF01653">
    <property type="entry name" value="DNA_ligase_aden"/>
    <property type="match status" value="1"/>
</dbReference>
<dbReference type="Pfam" id="PF03120">
    <property type="entry name" value="DNA_ligase_OB"/>
    <property type="match status" value="1"/>
</dbReference>
<dbReference type="Pfam" id="PF03119">
    <property type="entry name" value="DNA_ligase_ZBD"/>
    <property type="match status" value="1"/>
</dbReference>
<dbReference type="Pfam" id="PF12826">
    <property type="entry name" value="HHH_2"/>
    <property type="match status" value="1"/>
</dbReference>
<dbReference type="PIRSF" id="PIRSF001604">
    <property type="entry name" value="LigA"/>
    <property type="match status" value="1"/>
</dbReference>
<dbReference type="SMART" id="SM00292">
    <property type="entry name" value="BRCT"/>
    <property type="match status" value="1"/>
</dbReference>
<dbReference type="SMART" id="SM00532">
    <property type="entry name" value="LIGANc"/>
    <property type="match status" value="1"/>
</dbReference>
<dbReference type="SUPFAM" id="SSF52113">
    <property type="entry name" value="BRCT domain"/>
    <property type="match status" value="1"/>
</dbReference>
<dbReference type="SUPFAM" id="SSF56091">
    <property type="entry name" value="DNA ligase/mRNA capping enzyme, catalytic domain"/>
    <property type="match status" value="1"/>
</dbReference>
<dbReference type="SUPFAM" id="SSF50249">
    <property type="entry name" value="Nucleic acid-binding proteins"/>
    <property type="match status" value="1"/>
</dbReference>
<dbReference type="SUPFAM" id="SSF47781">
    <property type="entry name" value="RuvA domain 2-like"/>
    <property type="match status" value="1"/>
</dbReference>
<dbReference type="PROSITE" id="PS50172">
    <property type="entry name" value="BRCT"/>
    <property type="match status" value="1"/>
</dbReference>
<dbReference type="PROSITE" id="PS01056">
    <property type="entry name" value="DNA_LIGASE_N2"/>
    <property type="match status" value="1"/>
</dbReference>
<reference key="1">
    <citation type="submission" date="2006-10" db="EMBL/GenBank/DDBJ databases">
        <title>Complete sequence of chromosome of Pelobacter propionicus DSM 2379.</title>
        <authorList>
            <consortium name="US DOE Joint Genome Institute"/>
            <person name="Copeland A."/>
            <person name="Lucas S."/>
            <person name="Lapidus A."/>
            <person name="Barry K."/>
            <person name="Detter J.C."/>
            <person name="Glavina del Rio T."/>
            <person name="Hammon N."/>
            <person name="Israni S."/>
            <person name="Dalin E."/>
            <person name="Tice H."/>
            <person name="Pitluck S."/>
            <person name="Saunders E."/>
            <person name="Brettin T."/>
            <person name="Bruce D."/>
            <person name="Han C."/>
            <person name="Tapia R."/>
            <person name="Schmutz J."/>
            <person name="Larimer F."/>
            <person name="Land M."/>
            <person name="Hauser L."/>
            <person name="Kyrpides N."/>
            <person name="Kim E."/>
            <person name="Lovley D."/>
            <person name="Richardson P."/>
        </authorList>
    </citation>
    <scope>NUCLEOTIDE SEQUENCE [LARGE SCALE GENOMIC DNA]</scope>
    <source>
        <strain>DSM 2379 / NBRC 103807 / OttBd1</strain>
    </source>
</reference>
<comment type="function">
    <text evidence="1">DNA ligase that catalyzes the formation of phosphodiester linkages between 5'-phosphoryl and 3'-hydroxyl groups in double-stranded DNA using NAD as a coenzyme and as the energy source for the reaction. It is essential for DNA replication and repair of damaged DNA.</text>
</comment>
<comment type="catalytic activity">
    <reaction evidence="1">
        <text>NAD(+) + (deoxyribonucleotide)n-3'-hydroxyl + 5'-phospho-(deoxyribonucleotide)m = (deoxyribonucleotide)n+m + AMP + beta-nicotinamide D-nucleotide.</text>
        <dbReference type="EC" id="6.5.1.2"/>
    </reaction>
</comment>
<comment type="cofactor">
    <cofactor evidence="1">
        <name>Mg(2+)</name>
        <dbReference type="ChEBI" id="CHEBI:18420"/>
    </cofactor>
    <cofactor evidence="1">
        <name>Mn(2+)</name>
        <dbReference type="ChEBI" id="CHEBI:29035"/>
    </cofactor>
</comment>
<comment type="similarity">
    <text evidence="1">Belongs to the NAD-dependent DNA ligase family. LigA subfamily.</text>
</comment>
<organism>
    <name type="scientific">Pelobacter propionicus (strain DSM 2379 / NBRC 103807 / OttBd1)</name>
    <dbReference type="NCBI Taxonomy" id="338966"/>
    <lineage>
        <taxon>Bacteria</taxon>
        <taxon>Pseudomonadati</taxon>
        <taxon>Thermodesulfobacteriota</taxon>
        <taxon>Desulfuromonadia</taxon>
        <taxon>Desulfuromonadales</taxon>
        <taxon>Desulfuromonadaceae</taxon>
        <taxon>Pelobacter</taxon>
    </lineage>
</organism>